<gene>
    <name type="ordered locus">BQ2027_MB3816C</name>
</gene>
<accession>Q7TVN7</accession>
<accession>A0A1R3Y6R3</accession>
<accession>X2BPK3</accession>
<dbReference type="EC" id="2.1.1.-"/>
<dbReference type="EMBL" id="LT708304">
    <property type="protein sequence ID" value="SIU02445.1"/>
    <property type="molecule type" value="Genomic_DNA"/>
</dbReference>
<dbReference type="RefSeq" id="NP_857453.1">
    <property type="nucleotide sequence ID" value="NC_002945.3"/>
</dbReference>
<dbReference type="RefSeq" id="WP_003420620.1">
    <property type="nucleotide sequence ID" value="NC_002945.4"/>
</dbReference>
<dbReference type="SMR" id="Q7TVN7"/>
<dbReference type="KEGG" id="mbo:BQ2027_MB3816C"/>
<dbReference type="PATRIC" id="fig|233413.5.peg.4173"/>
<dbReference type="Proteomes" id="UP000001419">
    <property type="component" value="Chromosome"/>
</dbReference>
<dbReference type="GO" id="GO:0008168">
    <property type="term" value="F:methyltransferase activity"/>
    <property type="evidence" value="ECO:0007669"/>
    <property type="project" value="UniProtKB-KW"/>
</dbReference>
<dbReference type="GO" id="GO:0032259">
    <property type="term" value="P:methylation"/>
    <property type="evidence" value="ECO:0007669"/>
    <property type="project" value="UniProtKB-KW"/>
</dbReference>
<dbReference type="Gene3D" id="3.40.50.150">
    <property type="entry name" value="Vaccinia Virus protein VP39"/>
    <property type="match status" value="1"/>
</dbReference>
<dbReference type="InterPro" id="IPR007213">
    <property type="entry name" value="Ppm1/Ppm2/Tcmp"/>
</dbReference>
<dbReference type="InterPro" id="IPR029063">
    <property type="entry name" value="SAM-dependent_MTases_sf"/>
</dbReference>
<dbReference type="InterPro" id="IPR011610">
    <property type="entry name" value="SAM_mthyl_Trfase_ML2640-like"/>
</dbReference>
<dbReference type="NCBIfam" id="TIGR00027">
    <property type="entry name" value="mthyl_TIGR00027"/>
    <property type="match status" value="1"/>
</dbReference>
<dbReference type="PANTHER" id="PTHR43619">
    <property type="entry name" value="S-ADENOSYL-L-METHIONINE-DEPENDENT METHYLTRANSFERASE YKTD-RELATED"/>
    <property type="match status" value="1"/>
</dbReference>
<dbReference type="PANTHER" id="PTHR43619:SF2">
    <property type="entry name" value="S-ADENOSYL-L-METHIONINE-DEPENDENT METHYLTRANSFERASES SUPERFAMILY PROTEIN"/>
    <property type="match status" value="1"/>
</dbReference>
<dbReference type="Pfam" id="PF04072">
    <property type="entry name" value="LCM"/>
    <property type="match status" value="1"/>
</dbReference>
<dbReference type="SUPFAM" id="SSF53335">
    <property type="entry name" value="S-adenosyl-L-methionine-dependent methyltransferases"/>
    <property type="match status" value="1"/>
</dbReference>
<sequence>MARTDDDSWDLATGVGATATLVAAGRARAARAAQPLIDDPFAEPLVRAVGVEFLTRWATGELDAADVDDPDAAWGLQRMTTELVVRTRYFDQFFLDAAAAGVRQAVILASGLDARGYRLPWPADTTVFEVDQPRVLEFKAQTLAGLGAQPTADLRMVPADLRHDWPDALRRGGFDAAEPAAWIAEGLFGYLPPDAQNRLLDHVTDLSAPGSRLALEAFLGSADRDSARVEEMIRTATRGWREHGFHLDIWALNYAGPRHEVSGYLDNHGWRSVGTTTAQLLAAHDLPAAPALPAGLADRPNYWTCVLG</sequence>
<feature type="chain" id="PRO_0000361136" description="Putative S-adenosyl-L-methionine-dependent methyltransferase Mb3816c">
    <location>
        <begin position="1"/>
        <end position="308"/>
    </location>
</feature>
<feature type="binding site" evidence="1">
    <location>
        <position position="131"/>
    </location>
    <ligand>
        <name>S-adenosyl-L-methionine</name>
        <dbReference type="ChEBI" id="CHEBI:59789"/>
    </ligand>
</feature>
<feature type="binding site" evidence="1">
    <location>
        <begin position="160"/>
        <end position="161"/>
    </location>
    <ligand>
        <name>S-adenosyl-L-methionine</name>
        <dbReference type="ChEBI" id="CHEBI:59789"/>
    </ligand>
</feature>
<protein>
    <recommendedName>
        <fullName>Putative S-adenosyl-L-methionine-dependent methyltransferase Mb3816c</fullName>
        <ecNumber>2.1.1.-</ecNumber>
    </recommendedName>
</protein>
<keyword id="KW-0489">Methyltransferase</keyword>
<keyword id="KW-1185">Reference proteome</keyword>
<keyword id="KW-0949">S-adenosyl-L-methionine</keyword>
<keyword id="KW-0808">Transferase</keyword>
<comment type="function">
    <text evidence="1">Exhibits S-adenosyl-L-methionine-dependent methyltransferase activity.</text>
</comment>
<comment type="similarity">
    <text evidence="2">Belongs to the UPF0677 family.</text>
</comment>
<reference key="1">
    <citation type="journal article" date="2003" name="Proc. Natl. Acad. Sci. U.S.A.">
        <title>The complete genome sequence of Mycobacterium bovis.</title>
        <authorList>
            <person name="Garnier T."/>
            <person name="Eiglmeier K."/>
            <person name="Camus J.-C."/>
            <person name="Medina N."/>
            <person name="Mansoor H."/>
            <person name="Pryor M."/>
            <person name="Duthoy S."/>
            <person name="Grondin S."/>
            <person name="Lacroix C."/>
            <person name="Monsempe C."/>
            <person name="Simon S."/>
            <person name="Harris B."/>
            <person name="Atkin R."/>
            <person name="Doggett J."/>
            <person name="Mayes R."/>
            <person name="Keating L."/>
            <person name="Wheeler P.R."/>
            <person name="Parkhill J."/>
            <person name="Barrell B.G."/>
            <person name="Cole S.T."/>
            <person name="Gordon S.V."/>
            <person name="Hewinson R.G."/>
        </authorList>
    </citation>
    <scope>NUCLEOTIDE SEQUENCE [LARGE SCALE GENOMIC DNA]</scope>
    <source>
        <strain>ATCC BAA-935 / AF2122/97</strain>
    </source>
</reference>
<reference key="2">
    <citation type="journal article" date="2017" name="Genome Announc.">
        <title>Updated reference genome sequence and annotation of Mycobacterium bovis AF2122/97.</title>
        <authorList>
            <person name="Malone K.M."/>
            <person name="Farrell D."/>
            <person name="Stuber T.P."/>
            <person name="Schubert O.T."/>
            <person name="Aebersold R."/>
            <person name="Robbe-Austerman S."/>
            <person name="Gordon S.V."/>
        </authorList>
    </citation>
    <scope>NUCLEOTIDE SEQUENCE [LARGE SCALE GENOMIC DNA]</scope>
    <scope>GENOME REANNOTATION</scope>
    <source>
        <strain>ATCC BAA-935 / AF2122/97</strain>
    </source>
</reference>
<name>Y3816_MYCBO</name>
<organism>
    <name type="scientific">Mycobacterium bovis (strain ATCC BAA-935 / AF2122/97)</name>
    <dbReference type="NCBI Taxonomy" id="233413"/>
    <lineage>
        <taxon>Bacteria</taxon>
        <taxon>Bacillati</taxon>
        <taxon>Actinomycetota</taxon>
        <taxon>Actinomycetes</taxon>
        <taxon>Mycobacteriales</taxon>
        <taxon>Mycobacteriaceae</taxon>
        <taxon>Mycobacterium</taxon>
        <taxon>Mycobacterium tuberculosis complex</taxon>
    </lineage>
</organism>
<proteinExistence type="inferred from homology"/>
<evidence type="ECO:0000250" key="1"/>
<evidence type="ECO:0000305" key="2"/>